<dbReference type="EC" id="4.2.1.9" evidence="1"/>
<dbReference type="EMBL" id="AP009493">
    <property type="protein sequence ID" value="BAG20964.1"/>
    <property type="molecule type" value="Genomic_DNA"/>
</dbReference>
<dbReference type="RefSeq" id="WP_012380379.1">
    <property type="nucleotide sequence ID" value="NC_010572.1"/>
</dbReference>
<dbReference type="SMR" id="B1VSL0"/>
<dbReference type="KEGG" id="sgr:SGR_4135"/>
<dbReference type="PATRIC" id="fig|455632.4.peg.4210"/>
<dbReference type="eggNOG" id="COG0129">
    <property type="taxonomic scope" value="Bacteria"/>
</dbReference>
<dbReference type="HOGENOM" id="CLU_014271_4_2_11"/>
<dbReference type="UniPathway" id="UPA00047">
    <property type="reaction ID" value="UER00057"/>
</dbReference>
<dbReference type="UniPathway" id="UPA00049">
    <property type="reaction ID" value="UER00061"/>
</dbReference>
<dbReference type="Proteomes" id="UP000001685">
    <property type="component" value="Chromosome"/>
</dbReference>
<dbReference type="GO" id="GO:0005829">
    <property type="term" value="C:cytosol"/>
    <property type="evidence" value="ECO:0007669"/>
    <property type="project" value="TreeGrafter"/>
</dbReference>
<dbReference type="GO" id="GO:0051537">
    <property type="term" value="F:2 iron, 2 sulfur cluster binding"/>
    <property type="evidence" value="ECO:0007669"/>
    <property type="project" value="UniProtKB-UniRule"/>
</dbReference>
<dbReference type="GO" id="GO:0004160">
    <property type="term" value="F:dihydroxy-acid dehydratase activity"/>
    <property type="evidence" value="ECO:0007669"/>
    <property type="project" value="UniProtKB-UniRule"/>
</dbReference>
<dbReference type="GO" id="GO:0000287">
    <property type="term" value="F:magnesium ion binding"/>
    <property type="evidence" value="ECO:0007669"/>
    <property type="project" value="UniProtKB-UniRule"/>
</dbReference>
<dbReference type="GO" id="GO:0009097">
    <property type="term" value="P:isoleucine biosynthetic process"/>
    <property type="evidence" value="ECO:0007669"/>
    <property type="project" value="UniProtKB-UniRule"/>
</dbReference>
<dbReference type="GO" id="GO:0009099">
    <property type="term" value="P:L-valine biosynthetic process"/>
    <property type="evidence" value="ECO:0007669"/>
    <property type="project" value="UniProtKB-UniRule"/>
</dbReference>
<dbReference type="FunFam" id="3.50.30.80:FF:000001">
    <property type="entry name" value="Dihydroxy-acid dehydratase"/>
    <property type="match status" value="1"/>
</dbReference>
<dbReference type="Gene3D" id="3.50.30.80">
    <property type="entry name" value="IlvD/EDD C-terminal domain-like"/>
    <property type="match status" value="1"/>
</dbReference>
<dbReference type="HAMAP" id="MF_00012">
    <property type="entry name" value="IlvD"/>
    <property type="match status" value="1"/>
</dbReference>
<dbReference type="InterPro" id="IPR042096">
    <property type="entry name" value="Dihydro-acid_dehy_C"/>
</dbReference>
<dbReference type="InterPro" id="IPR004404">
    <property type="entry name" value="DihydroxyA_deHydtase"/>
</dbReference>
<dbReference type="InterPro" id="IPR020558">
    <property type="entry name" value="DiOHA_6PGluconate_deHydtase_CS"/>
</dbReference>
<dbReference type="InterPro" id="IPR056740">
    <property type="entry name" value="ILV_EDD_C"/>
</dbReference>
<dbReference type="InterPro" id="IPR000581">
    <property type="entry name" value="ILV_EDD_N"/>
</dbReference>
<dbReference type="InterPro" id="IPR037237">
    <property type="entry name" value="IlvD/EDD_N"/>
</dbReference>
<dbReference type="NCBIfam" id="TIGR00110">
    <property type="entry name" value="ilvD"/>
    <property type="match status" value="1"/>
</dbReference>
<dbReference type="NCBIfam" id="NF009103">
    <property type="entry name" value="PRK12448.1"/>
    <property type="match status" value="1"/>
</dbReference>
<dbReference type="PANTHER" id="PTHR43661">
    <property type="entry name" value="D-XYLONATE DEHYDRATASE"/>
    <property type="match status" value="1"/>
</dbReference>
<dbReference type="PANTHER" id="PTHR43661:SF3">
    <property type="entry name" value="D-XYLONATE DEHYDRATASE YAGF-RELATED"/>
    <property type="match status" value="1"/>
</dbReference>
<dbReference type="Pfam" id="PF24877">
    <property type="entry name" value="ILV_EDD_C"/>
    <property type="match status" value="1"/>
</dbReference>
<dbReference type="Pfam" id="PF00920">
    <property type="entry name" value="ILVD_EDD_N"/>
    <property type="match status" value="1"/>
</dbReference>
<dbReference type="SUPFAM" id="SSF143975">
    <property type="entry name" value="IlvD/EDD N-terminal domain-like"/>
    <property type="match status" value="1"/>
</dbReference>
<dbReference type="SUPFAM" id="SSF52016">
    <property type="entry name" value="LeuD/IlvD-like"/>
    <property type="match status" value="1"/>
</dbReference>
<dbReference type="PROSITE" id="PS00886">
    <property type="entry name" value="ILVD_EDD_1"/>
    <property type="match status" value="1"/>
</dbReference>
<dbReference type="PROSITE" id="PS00887">
    <property type="entry name" value="ILVD_EDD_2"/>
    <property type="match status" value="1"/>
</dbReference>
<reference key="1">
    <citation type="journal article" date="2008" name="J. Bacteriol.">
        <title>Genome sequence of the streptomycin-producing microorganism Streptomyces griseus IFO 13350.</title>
        <authorList>
            <person name="Ohnishi Y."/>
            <person name="Ishikawa J."/>
            <person name="Hara H."/>
            <person name="Suzuki H."/>
            <person name="Ikenoya M."/>
            <person name="Ikeda H."/>
            <person name="Yamashita A."/>
            <person name="Hattori M."/>
            <person name="Horinouchi S."/>
        </authorList>
    </citation>
    <scope>NUCLEOTIDE SEQUENCE [LARGE SCALE GENOMIC DNA]</scope>
    <source>
        <strain>JCM 4626 / CBS 651.72 / NBRC 13350 / KCC S-0626 / ISP 5235</strain>
    </source>
</reference>
<protein>
    <recommendedName>
        <fullName evidence="1">Dihydroxy-acid dehydratase</fullName>
        <shortName evidence="1">DAD</shortName>
        <ecNumber evidence="1">4.2.1.9</ecNumber>
    </recommendedName>
</protein>
<gene>
    <name evidence="1" type="primary">ilvD</name>
    <name type="ordered locus">SGR_4135</name>
</gene>
<feature type="chain" id="PRO_1000089416" description="Dihydroxy-acid dehydratase">
    <location>
        <begin position="1"/>
        <end position="616"/>
    </location>
</feature>
<feature type="active site" description="Proton acceptor" evidence="1">
    <location>
        <position position="522"/>
    </location>
</feature>
<feature type="binding site" evidence="1">
    <location>
        <position position="81"/>
    </location>
    <ligand>
        <name>Mg(2+)</name>
        <dbReference type="ChEBI" id="CHEBI:18420"/>
    </ligand>
</feature>
<feature type="binding site" evidence="1">
    <location>
        <position position="122"/>
    </location>
    <ligand>
        <name>[2Fe-2S] cluster</name>
        <dbReference type="ChEBI" id="CHEBI:190135"/>
    </ligand>
</feature>
<feature type="binding site" evidence="1">
    <location>
        <position position="123"/>
    </location>
    <ligand>
        <name>Mg(2+)</name>
        <dbReference type="ChEBI" id="CHEBI:18420"/>
    </ligand>
</feature>
<feature type="binding site" description="via carbamate group" evidence="1">
    <location>
        <position position="124"/>
    </location>
    <ligand>
        <name>Mg(2+)</name>
        <dbReference type="ChEBI" id="CHEBI:18420"/>
    </ligand>
</feature>
<feature type="binding site" evidence="1">
    <location>
        <position position="196"/>
    </location>
    <ligand>
        <name>[2Fe-2S] cluster</name>
        <dbReference type="ChEBI" id="CHEBI:190135"/>
    </ligand>
</feature>
<feature type="binding site" evidence="1">
    <location>
        <position position="496"/>
    </location>
    <ligand>
        <name>Mg(2+)</name>
        <dbReference type="ChEBI" id="CHEBI:18420"/>
    </ligand>
</feature>
<feature type="modified residue" description="N6-carboxylysine" evidence="1">
    <location>
        <position position="124"/>
    </location>
</feature>
<proteinExistence type="inferred from homology"/>
<organism>
    <name type="scientific">Streptomyces griseus subsp. griseus (strain JCM 4626 / CBS 651.72 / NBRC 13350 / KCC S-0626 / ISP 5235)</name>
    <dbReference type="NCBI Taxonomy" id="455632"/>
    <lineage>
        <taxon>Bacteria</taxon>
        <taxon>Bacillati</taxon>
        <taxon>Actinomycetota</taxon>
        <taxon>Actinomycetes</taxon>
        <taxon>Kitasatosporales</taxon>
        <taxon>Streptomycetaceae</taxon>
        <taxon>Streptomyces</taxon>
    </lineage>
</organism>
<evidence type="ECO:0000255" key="1">
    <source>
        <dbReference type="HAMAP-Rule" id="MF_00012"/>
    </source>
</evidence>
<name>ILVD_STRGG</name>
<comment type="function">
    <text evidence="1">Functions in the biosynthesis of branched-chain amino acids. Catalyzes the dehydration of (2R,3R)-2,3-dihydroxy-3-methylpentanoate (2,3-dihydroxy-3-methylvalerate) into 2-oxo-3-methylpentanoate (2-oxo-3-methylvalerate) and of (2R)-2,3-dihydroxy-3-methylbutanoate (2,3-dihydroxyisovalerate) into 2-oxo-3-methylbutanoate (2-oxoisovalerate), the penultimate precursor to L-isoleucine and L-valine, respectively.</text>
</comment>
<comment type="catalytic activity">
    <reaction evidence="1">
        <text>(2R)-2,3-dihydroxy-3-methylbutanoate = 3-methyl-2-oxobutanoate + H2O</text>
        <dbReference type="Rhea" id="RHEA:24809"/>
        <dbReference type="ChEBI" id="CHEBI:11851"/>
        <dbReference type="ChEBI" id="CHEBI:15377"/>
        <dbReference type="ChEBI" id="CHEBI:49072"/>
        <dbReference type="EC" id="4.2.1.9"/>
    </reaction>
    <physiologicalReaction direction="left-to-right" evidence="1">
        <dbReference type="Rhea" id="RHEA:24810"/>
    </physiologicalReaction>
</comment>
<comment type="catalytic activity">
    <reaction evidence="1">
        <text>(2R,3R)-2,3-dihydroxy-3-methylpentanoate = (S)-3-methyl-2-oxopentanoate + H2O</text>
        <dbReference type="Rhea" id="RHEA:27694"/>
        <dbReference type="ChEBI" id="CHEBI:15377"/>
        <dbReference type="ChEBI" id="CHEBI:35146"/>
        <dbReference type="ChEBI" id="CHEBI:49258"/>
        <dbReference type="EC" id="4.2.1.9"/>
    </reaction>
    <physiologicalReaction direction="left-to-right" evidence="1">
        <dbReference type="Rhea" id="RHEA:27695"/>
    </physiologicalReaction>
</comment>
<comment type="cofactor">
    <cofactor evidence="1">
        <name>[2Fe-2S] cluster</name>
        <dbReference type="ChEBI" id="CHEBI:190135"/>
    </cofactor>
    <text evidence="1">Binds 1 [2Fe-2S] cluster per subunit. This cluster acts as a Lewis acid cofactor.</text>
</comment>
<comment type="cofactor">
    <cofactor evidence="1">
        <name>Mg(2+)</name>
        <dbReference type="ChEBI" id="CHEBI:18420"/>
    </cofactor>
</comment>
<comment type="pathway">
    <text evidence="1">Amino-acid biosynthesis; L-isoleucine biosynthesis; L-isoleucine from 2-oxobutanoate: step 3/4.</text>
</comment>
<comment type="pathway">
    <text evidence="1">Amino-acid biosynthesis; L-valine biosynthesis; L-valine from pyruvate: step 3/4.</text>
</comment>
<comment type="subunit">
    <text evidence="1">Homodimer.</text>
</comment>
<comment type="similarity">
    <text evidence="1">Belongs to the IlvD/Edd family.</text>
</comment>
<keyword id="KW-0001">2Fe-2S</keyword>
<keyword id="KW-0028">Amino-acid biosynthesis</keyword>
<keyword id="KW-0100">Branched-chain amino acid biosynthesis</keyword>
<keyword id="KW-0408">Iron</keyword>
<keyword id="KW-0411">Iron-sulfur</keyword>
<keyword id="KW-0456">Lyase</keyword>
<keyword id="KW-0460">Magnesium</keyword>
<keyword id="KW-0479">Metal-binding</keyword>
<sequence>MPQLRSRTVTHGRNMAGARALMRASGVASADIGKPIIAVANSFTEFVPGHTHLAPVGRIVSEAIQAAGAVPREFNTIAVDDGIAMGHGGMLYSLPSRDLIADSVEYMVEAHCADALICISNCDKITPGMLMAAMRLNIPTVFVSGGPMEAGKATLVDGTVRKLDLVNAISDAVDESISDEDILRIEENACPTCGSCSGMFTANSMNCLTEVLGLSLPGNGSVLATHTARKALYEDAGRTVVEITKRYYEQDDETVLPRSIGTRAAFDNAMALDIAMGGSTNTILHLLAAAEEAELAYDLDDINEVSRRVPCLSKVAPNVAPGGTYYMEDVHRAGGIPALLGELHRGGLLNEDVHSVHSDTLAEWLKNWDVRGGSPSPEAIELWHAAPGCVRSATAFSQSERWDTLDLDAAGGCIRDVEHAYSKDGGLAVLKGNLAVDGCVVKTAGVDESIWTFEGPAVVCESQDEAVDKILRKEIEPGDVVVIRYEGPRGGPGMQEMLYPTSFLKGRGLGKVCALVTDGRFSGGTSGLSIGHASPEAASGGTIALVEDGDRIRIDIPNRSIELLVDDAELATRREALNGVYAPKNRDRKVSAALRAYAAMATSADRGAVRDVSKLG</sequence>
<accession>B1VSL0</accession>